<sequence length="261" mass="29197">MIVSEPLLRVENLSKTYPNGVQALKNINLEVHPGEFLVVIGLSGSGKSTLLRCLNRLQEPTSGNIYFSGQEIGQVQDAEKIRSVRSKMAMIFQHFNLIPRQSVLKNVLMGRLAAKSTWQSLWGMFSDAERIEAKENLRLVGIAEKASLRADQLSGGQKQRVAIARALMQKPVLLLADEPVSSLDPATCHVVMDYLRRINQEMGITVIANLHFLSLVRKYATRVVALKDGEIVFRGKPEEITEEWFRRIYGEGAQDVAPNDI</sequence>
<name>PHNC_BDEBA</name>
<dbReference type="EC" id="7.3.2.2" evidence="1"/>
<dbReference type="EMBL" id="BX842654">
    <property type="protein sequence ID" value="CAE80866.1"/>
    <property type="molecule type" value="Genomic_DNA"/>
</dbReference>
<dbReference type="RefSeq" id="WP_011165470.1">
    <property type="nucleotide sequence ID" value="NC_005363.1"/>
</dbReference>
<dbReference type="SMR" id="Q6MIP7"/>
<dbReference type="STRING" id="264462.Bd3104"/>
<dbReference type="GeneID" id="93013956"/>
<dbReference type="KEGG" id="bba:Bd3104"/>
<dbReference type="eggNOG" id="COG3638">
    <property type="taxonomic scope" value="Bacteria"/>
</dbReference>
<dbReference type="HOGENOM" id="CLU_000604_1_22_7"/>
<dbReference type="Proteomes" id="UP000008080">
    <property type="component" value="Chromosome"/>
</dbReference>
<dbReference type="GO" id="GO:0005886">
    <property type="term" value="C:plasma membrane"/>
    <property type="evidence" value="ECO:0007669"/>
    <property type="project" value="UniProtKB-SubCell"/>
</dbReference>
<dbReference type="GO" id="GO:0015416">
    <property type="term" value="F:ABC-type phosphonate transporter activity"/>
    <property type="evidence" value="ECO:0007669"/>
    <property type="project" value="UniProtKB-EC"/>
</dbReference>
<dbReference type="GO" id="GO:0005524">
    <property type="term" value="F:ATP binding"/>
    <property type="evidence" value="ECO:0007669"/>
    <property type="project" value="UniProtKB-KW"/>
</dbReference>
<dbReference type="GO" id="GO:0016887">
    <property type="term" value="F:ATP hydrolysis activity"/>
    <property type="evidence" value="ECO:0007669"/>
    <property type="project" value="InterPro"/>
</dbReference>
<dbReference type="CDD" id="cd03256">
    <property type="entry name" value="ABC_PhnC_transporter"/>
    <property type="match status" value="1"/>
</dbReference>
<dbReference type="Gene3D" id="3.40.50.300">
    <property type="entry name" value="P-loop containing nucleotide triphosphate hydrolases"/>
    <property type="match status" value="1"/>
</dbReference>
<dbReference type="InterPro" id="IPR003593">
    <property type="entry name" value="AAA+_ATPase"/>
</dbReference>
<dbReference type="InterPro" id="IPR003439">
    <property type="entry name" value="ABC_transporter-like_ATP-bd"/>
</dbReference>
<dbReference type="InterPro" id="IPR017871">
    <property type="entry name" value="ABC_transporter-like_CS"/>
</dbReference>
<dbReference type="InterPro" id="IPR012693">
    <property type="entry name" value="ABC_transpr_PhnC"/>
</dbReference>
<dbReference type="InterPro" id="IPR050086">
    <property type="entry name" value="MetN_ABC_transporter-like"/>
</dbReference>
<dbReference type="InterPro" id="IPR027417">
    <property type="entry name" value="P-loop_NTPase"/>
</dbReference>
<dbReference type="NCBIfam" id="TIGR02315">
    <property type="entry name" value="ABC_phnC"/>
    <property type="match status" value="1"/>
</dbReference>
<dbReference type="PANTHER" id="PTHR43166">
    <property type="entry name" value="AMINO ACID IMPORT ATP-BINDING PROTEIN"/>
    <property type="match status" value="1"/>
</dbReference>
<dbReference type="PANTHER" id="PTHR43166:SF6">
    <property type="entry name" value="PHOSPHONATES IMPORT ATP-BINDING PROTEIN PHNC"/>
    <property type="match status" value="1"/>
</dbReference>
<dbReference type="Pfam" id="PF00005">
    <property type="entry name" value="ABC_tran"/>
    <property type="match status" value="1"/>
</dbReference>
<dbReference type="SMART" id="SM00382">
    <property type="entry name" value="AAA"/>
    <property type="match status" value="1"/>
</dbReference>
<dbReference type="SUPFAM" id="SSF52540">
    <property type="entry name" value="P-loop containing nucleoside triphosphate hydrolases"/>
    <property type="match status" value="1"/>
</dbReference>
<dbReference type="PROSITE" id="PS00211">
    <property type="entry name" value="ABC_TRANSPORTER_1"/>
    <property type="match status" value="1"/>
</dbReference>
<dbReference type="PROSITE" id="PS50893">
    <property type="entry name" value="ABC_TRANSPORTER_2"/>
    <property type="match status" value="1"/>
</dbReference>
<dbReference type="PROSITE" id="PS51249">
    <property type="entry name" value="PHNC"/>
    <property type="match status" value="1"/>
</dbReference>
<feature type="chain" id="PRO_0000092697" description="Phosphonates import ATP-binding protein PhnC">
    <location>
        <begin position="1"/>
        <end position="261"/>
    </location>
</feature>
<feature type="domain" description="ABC transporter" evidence="1">
    <location>
        <begin position="8"/>
        <end position="253"/>
    </location>
</feature>
<feature type="binding site" evidence="1">
    <location>
        <begin position="41"/>
        <end position="48"/>
    </location>
    <ligand>
        <name>ATP</name>
        <dbReference type="ChEBI" id="CHEBI:30616"/>
    </ligand>
</feature>
<organism>
    <name type="scientific">Bdellovibrio bacteriovorus (strain ATCC 15356 / DSM 50701 / NCIMB 9529 / HD100)</name>
    <dbReference type="NCBI Taxonomy" id="264462"/>
    <lineage>
        <taxon>Bacteria</taxon>
        <taxon>Pseudomonadati</taxon>
        <taxon>Bdellovibrionota</taxon>
        <taxon>Bdellovibrionia</taxon>
        <taxon>Bdellovibrionales</taxon>
        <taxon>Pseudobdellovibrionaceae</taxon>
        <taxon>Bdellovibrio</taxon>
    </lineage>
</organism>
<evidence type="ECO:0000255" key="1">
    <source>
        <dbReference type="HAMAP-Rule" id="MF_01713"/>
    </source>
</evidence>
<reference key="1">
    <citation type="journal article" date="2004" name="Science">
        <title>A predator unmasked: life cycle of Bdellovibrio bacteriovorus from a genomic perspective.</title>
        <authorList>
            <person name="Rendulic S."/>
            <person name="Jagtap P."/>
            <person name="Rosinus A."/>
            <person name="Eppinger M."/>
            <person name="Baar C."/>
            <person name="Lanz C."/>
            <person name="Keller H."/>
            <person name="Lambert C."/>
            <person name="Evans K.J."/>
            <person name="Goesmann A."/>
            <person name="Meyer F."/>
            <person name="Sockett R.E."/>
            <person name="Schuster S.C."/>
        </authorList>
    </citation>
    <scope>NUCLEOTIDE SEQUENCE [LARGE SCALE GENOMIC DNA]</scope>
    <source>
        <strain>ATCC 15356 / DSM 50701 / NCIMB 9529 / HD100</strain>
    </source>
</reference>
<keyword id="KW-0067">ATP-binding</keyword>
<keyword id="KW-0997">Cell inner membrane</keyword>
<keyword id="KW-1003">Cell membrane</keyword>
<keyword id="KW-0472">Membrane</keyword>
<keyword id="KW-0547">Nucleotide-binding</keyword>
<keyword id="KW-0918">Phosphonate transport</keyword>
<keyword id="KW-1185">Reference proteome</keyword>
<keyword id="KW-1278">Translocase</keyword>
<keyword id="KW-0813">Transport</keyword>
<comment type="function">
    <text evidence="1">Part of the ABC transporter complex PhnCDE involved in phosphonates import. Responsible for energy coupling to the transport system.</text>
</comment>
<comment type="catalytic activity">
    <reaction evidence="1">
        <text>phosphonate(out) + ATP + H2O = phosphonate(in) + ADP + phosphate + H(+)</text>
        <dbReference type="Rhea" id="RHEA:18065"/>
        <dbReference type="ChEBI" id="CHEBI:15377"/>
        <dbReference type="ChEBI" id="CHEBI:15378"/>
        <dbReference type="ChEBI" id="CHEBI:16215"/>
        <dbReference type="ChEBI" id="CHEBI:30616"/>
        <dbReference type="ChEBI" id="CHEBI:43474"/>
        <dbReference type="ChEBI" id="CHEBI:456216"/>
        <dbReference type="EC" id="7.3.2.2"/>
    </reaction>
</comment>
<comment type="subunit">
    <text evidence="1">The complex is composed of two ATP-binding proteins (PhnC), two transmembrane proteins (PhnE) and a solute-binding protein (PhnD).</text>
</comment>
<comment type="subcellular location">
    <subcellularLocation>
        <location evidence="1">Cell inner membrane</location>
        <topology evidence="1">Peripheral membrane protein</topology>
    </subcellularLocation>
</comment>
<comment type="similarity">
    <text evidence="1">Belongs to the ABC transporter superfamily. Phosphonates importer (TC 3.A.1.9.1) family.</text>
</comment>
<proteinExistence type="inferred from homology"/>
<accession>Q6MIP7</accession>
<protein>
    <recommendedName>
        <fullName evidence="1">Phosphonates import ATP-binding protein PhnC</fullName>
        <ecNumber evidence="1">7.3.2.2</ecNumber>
    </recommendedName>
</protein>
<gene>
    <name evidence="1" type="primary">phnC</name>
    <name type="ordered locus">Bd3104</name>
</gene>